<sequence length="1798" mass="196450">MDSTLRRVVFFSNEFPSDDLKELFRRLDQHSKDRRFRLLSIFLEESTAVLKDEVSKFPRPLKELVPPFDSVLGLVDVDFRQGPLGAAMESSILTILELGLFIGHYESEDTEWDLVPGESVLAGLSIGILAAAAVALSSSLADVAKTGAEAVRVSFRLGVYVADISTKLEAPQSDGTLSSWAHVVTEMTEASVQDELKQFNTDTHSPELTKVFISAADKTSISVSGPPSRIKAAFQHSPVLRYSKSLPLPVYDGLCHASHLYTQSDIDFIINSAESVILPDRSVRLALLSSQTGKPFIAKTASELFLEIGTELLTGTIYLDNVTAGIVQHLQPQSKETSSWQIDSFRTSLVLRGIHSAVEANLSGEQRQLIRRDLVSWVNRDFGPRRPRSYASSKLAIVGMACRLPGGADDLDLFWKLLEEGRDTLTTVPPDRFDLNTHYDPTGKTENATQTPYGNFIDRPGFFDAGFFNMSPREAEQTDPMQRLALVTAYEALEMAGVVPGRTPSTHPSRIGTFYGQASDDWRELNASQNISTYAVPGGERAFGNGRINYFFKFSGPSFNLDTACSSGLAAVQVACSALWAGEVDTAIAGGLNVITDPDNYCGLGNAHFLSKTGQCKVWDKDADGYCRADGIGSVVIKRLEDAEADNDNILAVVLGASTNHSAEAISITHPHAGAQKANYRQVLNQAGVNPIDVSYIELHGTGTQAGDAVESESVSDIFAPVTPRRRPDQRLYLGAVKSNIGHGEAAAGIASLLKALLVYQKNLIPMHIGIKSEINPTIPKDLERRNVGLAMQNTPWPRPAGKKRLAVVNSFGAHGGNTTLLLEDAPERVKIQGTEDRITHAILLSAKSKKSLQANMESLLSYLDQHPETSLADLAYTTSSRRMHHNMRFGTSVSCISGLQKALRSQLDNPNFASEVRPVPNEAPSVILAFTGQGAYYHGMGRGLFTEFPYFRAQVQQLDRLAQRLGFPSVVPVIENSIEDTPSSPILTQLSVVILEIALARFWSLLGVSISAVIGHSLGEYAALAVSGVISTADAIYLVGRRAQLVEERCAQGSHSMLSVRASEDAIQEMLAAEPETALIAYEVSCCNTNQDTVIGGFQGEIDDIRRALEAKSIKCTILDVPYAFHTAQMNPILEDLETLAKAIPFKAPSIPVISPLLATVIYDVKSLNASYLRRATRETVDFAAAIEATQDMGLVDSKTMWIDVGPHPICAGLVRSMIPSAPVMSSCRRNEDSIATISKSLVTLYLAGLNPCWAEFFKPREREYSLLHLPKYRWNETDYWIPYIGTWTLDKAHLKHGTKPTTPFSVSMSRPSALRTSLVHQITAETVRTTTATLHTISDMQHPDFLEAIHGHTMNKCGVATSSIWSDMAFTVGEYLYRRLVPNTKDVHMNLTDVEVLHAQVASKTKGSVQPLVLRAHLDLSTSSMSLSWFNADGETGECAAESFATATILFEDPGAWRKEWARLAHLVLGRIEVLEQRATEGKASRLSKPLAYTLFKNVVDYADRYRGMDSVVLDELEAMAEVTLVPERYGTWHTPPHWIDSVSHLAGLVMNGSEASNTRDYFFVTPGCDSFRLLEKLEPGARYRSYVRMFPLPEDPNMHGGDVYILQGEEIVGVVGMIRFRRVPRLLMDRFFSPPTTTSVAGPVPPLAGATTKCHDIAQTAPALPTPTPPIVVSNPIVSSTLASKALEPAPLLATSSGDSTPKEPPIVTPAESERAGPVDNNMISQCLRLMARETGLEVEALTADASFVQLGVDSLMSLVLSEKFRAELGVEVKSSLFLECPTIGEMTAWIEEYC</sequence>
<feature type="chain" id="PRO_0000437895" description="Non-reducing polyketide synthase nscA">
    <location>
        <begin position="1"/>
        <end position="1798"/>
    </location>
</feature>
<feature type="domain" description="Ketosynthase family 3 (KS3)" evidence="7">
    <location>
        <begin position="392"/>
        <end position="825"/>
    </location>
</feature>
<feature type="domain" description="PKS/mFAS DH" evidence="8">
    <location>
        <begin position="1322"/>
        <end position="1632"/>
    </location>
</feature>
<feature type="domain" description="Carrier" evidence="6">
    <location>
        <begin position="1721"/>
        <end position="1798"/>
    </location>
</feature>
<feature type="region of interest" description="N-terminal acylcarrier protein transacylase domain (SAT)" evidence="5">
    <location>
        <begin position="25"/>
        <end position="256"/>
    </location>
</feature>
<feature type="region of interest" description="Malonyl-CoA:ACP transacylase (MAT) domain" evidence="5">
    <location>
        <begin position="931"/>
        <end position="1224"/>
    </location>
</feature>
<feature type="region of interest" description="N-terminal hotdog fold" evidence="8">
    <location>
        <begin position="1322"/>
        <end position="1458"/>
    </location>
</feature>
<feature type="region of interest" description="Product template (PT) domain" evidence="5">
    <location>
        <begin position="1390"/>
        <end position="1628"/>
    </location>
</feature>
<feature type="region of interest" description="C-terminal hotdog fold" evidence="8">
    <location>
        <begin position="1486"/>
        <end position="1632"/>
    </location>
</feature>
<feature type="region of interest" description="Disordered" evidence="9">
    <location>
        <begin position="1695"/>
        <end position="1721"/>
    </location>
</feature>
<feature type="active site" description="For beta-ketoacyl synthase activity" evidence="7">
    <location>
        <position position="565"/>
    </location>
</feature>
<feature type="active site" description="For beta-ketoacyl synthase activity" evidence="7">
    <location>
        <position position="700"/>
    </location>
</feature>
<feature type="active site" description="For beta-ketoacyl synthase activity" evidence="7">
    <location>
        <position position="743"/>
    </location>
</feature>
<feature type="active site" description="Proton acceptor; for dehydratase activity" evidence="8">
    <location>
        <position position="1354"/>
    </location>
</feature>
<feature type="active site" description="Proton donor; for dehydratase activity" evidence="8">
    <location>
        <position position="1543"/>
    </location>
</feature>
<feature type="modified residue" description="O-(pantetheine 4'-phosphoryl)serine" evidence="6">
    <location>
        <position position="1758"/>
    </location>
</feature>
<gene>
    <name evidence="10" type="primary">nscA</name>
    <name type="ORF">TERG_08357</name>
</gene>
<evidence type="ECO:0000250" key="1">
    <source>
        <dbReference type="UniProtKB" id="A0A0K0MCJ4"/>
    </source>
</evidence>
<evidence type="ECO:0000250" key="2">
    <source>
        <dbReference type="UniProtKB" id="A1D8I9"/>
    </source>
</evidence>
<evidence type="ECO:0000250" key="3">
    <source>
        <dbReference type="UniProtKB" id="F2S6Z9"/>
    </source>
</evidence>
<evidence type="ECO:0000250" key="4">
    <source>
        <dbReference type="UniProtKB" id="Q5B0D0"/>
    </source>
</evidence>
<evidence type="ECO:0000255" key="5"/>
<evidence type="ECO:0000255" key="6">
    <source>
        <dbReference type="PROSITE-ProRule" id="PRU00258"/>
    </source>
</evidence>
<evidence type="ECO:0000255" key="7">
    <source>
        <dbReference type="PROSITE-ProRule" id="PRU01348"/>
    </source>
</evidence>
<evidence type="ECO:0000255" key="8">
    <source>
        <dbReference type="PROSITE-ProRule" id="PRU01363"/>
    </source>
</evidence>
<evidence type="ECO:0000256" key="9">
    <source>
        <dbReference type="SAM" id="MobiDB-lite"/>
    </source>
</evidence>
<evidence type="ECO:0000303" key="10">
    <source>
    </source>
</evidence>
<evidence type="ECO:0000305" key="11">
    <source>
    </source>
</evidence>
<reference key="1">
    <citation type="journal article" date="2012" name="MBio">
        <title>Comparative genome analysis of Trichophyton rubrum and related dermatophytes reveals candidate genes involved in infection.</title>
        <authorList>
            <person name="Martinez D.A."/>
            <person name="Oliver B.G."/>
            <person name="Graeser Y."/>
            <person name="Goldberg J.M."/>
            <person name="Li W."/>
            <person name="Martinez-Rossi N.M."/>
            <person name="Monod M."/>
            <person name="Shelest E."/>
            <person name="Barton R.C."/>
            <person name="Birch E."/>
            <person name="Brakhage A.A."/>
            <person name="Chen Z."/>
            <person name="Gurr S.J."/>
            <person name="Heiman D."/>
            <person name="Heitman J."/>
            <person name="Kosti I."/>
            <person name="Rossi A."/>
            <person name="Saif S."/>
            <person name="Samalova M."/>
            <person name="Saunders C.W."/>
            <person name="Shea T."/>
            <person name="Summerbell R.C."/>
            <person name="Xu J."/>
            <person name="Young S."/>
            <person name="Zeng Q."/>
            <person name="Birren B.W."/>
            <person name="Cuomo C.A."/>
            <person name="White T.C."/>
        </authorList>
    </citation>
    <scope>NUCLEOTIDE SEQUENCE [LARGE SCALE GENOMIC DNA]</scope>
    <source>
        <strain>ATCC MYA-4607 / CBS 118892</strain>
    </source>
</reference>
<reference key="2">
    <citation type="journal article" date="2013" name="ACS Synth. Biol.">
        <title>Discovery of cryptic polyketide metabolites from dermatophytes using heterologous expression in Aspergillus nidulans.</title>
        <authorList>
            <person name="Yin W.B."/>
            <person name="Chooi Y.H."/>
            <person name="Smith A.R."/>
            <person name="Cacho R.A."/>
            <person name="Hu Y."/>
            <person name="White T.C."/>
            <person name="Tang Y."/>
        </authorList>
    </citation>
    <scope>FUNCTION</scope>
</reference>
<accession>F2T0M0</accession>
<protein>
    <recommendedName>
        <fullName evidence="10">Non-reducing polyketide synthase nscA</fullName>
        <ecNumber evidence="11">2.3.1.-</ecNumber>
    </recommendedName>
    <alternativeName>
        <fullName evidence="10">Conidial yellow pigment biosynthesis polyketide synthase nscA</fullName>
    </alternativeName>
    <alternativeName>
        <fullName evidence="10">Neosartoricin B biosynthesis protein A</fullName>
    </alternativeName>
</protein>
<keyword id="KW-0012">Acyltransferase</keyword>
<keyword id="KW-0511">Multifunctional enzyme</keyword>
<keyword id="KW-0596">Phosphopantetheine</keyword>
<keyword id="KW-0597">Phosphoprotein</keyword>
<keyword id="KW-1185">Reference proteome</keyword>
<keyword id="KW-0808">Transferase</keyword>
<proteinExistence type="inferred from homology"/>
<organism>
    <name type="scientific">Trichophyton rubrum (strain ATCC MYA-4607 / CBS 118892)</name>
    <name type="common">Athlete's foot fungus</name>
    <dbReference type="NCBI Taxonomy" id="559305"/>
    <lineage>
        <taxon>Eukaryota</taxon>
        <taxon>Fungi</taxon>
        <taxon>Dikarya</taxon>
        <taxon>Ascomycota</taxon>
        <taxon>Pezizomycotina</taxon>
        <taxon>Eurotiomycetes</taxon>
        <taxon>Eurotiomycetidae</taxon>
        <taxon>Onygenales</taxon>
        <taxon>Arthrodermataceae</taxon>
        <taxon>Trichophyton</taxon>
    </lineage>
</organism>
<name>NSCA_TRIRC</name>
<dbReference type="EC" id="2.3.1.-" evidence="11"/>
<dbReference type="EMBL" id="GG700661">
    <property type="protein sequence ID" value="EGD92142.1"/>
    <property type="molecule type" value="Genomic_DNA"/>
</dbReference>
<dbReference type="RefSeq" id="XP_003231059.1">
    <property type="nucleotide sequence ID" value="XM_003231011.1"/>
</dbReference>
<dbReference type="SMR" id="F2T0M0"/>
<dbReference type="STRING" id="559305.F2T0M0"/>
<dbReference type="GeneID" id="10377341"/>
<dbReference type="eggNOG" id="KOG1202">
    <property type="taxonomic scope" value="Eukaryota"/>
</dbReference>
<dbReference type="HOGENOM" id="CLU_000022_6_1_1"/>
<dbReference type="InParanoid" id="F2T0M0"/>
<dbReference type="OMA" id="LNTHYDP"/>
<dbReference type="OrthoDB" id="329835at2759"/>
<dbReference type="Proteomes" id="UP000008864">
    <property type="component" value="Unassembled WGS sequence"/>
</dbReference>
<dbReference type="GO" id="GO:0004315">
    <property type="term" value="F:3-oxoacyl-[acyl-carrier-protein] synthase activity"/>
    <property type="evidence" value="ECO:0007669"/>
    <property type="project" value="InterPro"/>
</dbReference>
<dbReference type="GO" id="GO:0004312">
    <property type="term" value="F:fatty acid synthase activity"/>
    <property type="evidence" value="ECO:0007669"/>
    <property type="project" value="TreeGrafter"/>
</dbReference>
<dbReference type="GO" id="GO:0031177">
    <property type="term" value="F:phosphopantetheine binding"/>
    <property type="evidence" value="ECO:0007669"/>
    <property type="project" value="InterPro"/>
</dbReference>
<dbReference type="GO" id="GO:0006633">
    <property type="term" value="P:fatty acid biosynthetic process"/>
    <property type="evidence" value="ECO:0007669"/>
    <property type="project" value="InterPro"/>
</dbReference>
<dbReference type="GO" id="GO:0044550">
    <property type="term" value="P:secondary metabolite biosynthetic process"/>
    <property type="evidence" value="ECO:0007669"/>
    <property type="project" value="TreeGrafter"/>
</dbReference>
<dbReference type="CDD" id="cd00833">
    <property type="entry name" value="PKS"/>
    <property type="match status" value="1"/>
</dbReference>
<dbReference type="FunFam" id="3.40.366.10:FF:000017">
    <property type="entry name" value="Non-reducing polyketide synthase aptA"/>
    <property type="match status" value="1"/>
</dbReference>
<dbReference type="FunFam" id="3.40.366.10:FF:000002">
    <property type="entry name" value="Probable polyketide synthase 2"/>
    <property type="match status" value="1"/>
</dbReference>
<dbReference type="FunFam" id="1.10.1200.10:FF:000011">
    <property type="entry name" value="Sterigmatocystin biosynthesis polyketide synthase"/>
    <property type="match status" value="1"/>
</dbReference>
<dbReference type="FunFam" id="3.10.129.110:FF:000001">
    <property type="entry name" value="Sterigmatocystin biosynthesis polyketide synthase"/>
    <property type="match status" value="1"/>
</dbReference>
<dbReference type="FunFam" id="3.40.47.10:FF:000031">
    <property type="entry name" value="Sterigmatocystin biosynthesis polyketide synthase"/>
    <property type="match status" value="1"/>
</dbReference>
<dbReference type="Gene3D" id="3.30.70.3290">
    <property type="match status" value="1"/>
</dbReference>
<dbReference type="Gene3D" id="3.40.47.10">
    <property type="match status" value="1"/>
</dbReference>
<dbReference type="Gene3D" id="1.10.1200.10">
    <property type="entry name" value="ACP-like"/>
    <property type="match status" value="1"/>
</dbReference>
<dbReference type="Gene3D" id="3.40.366.10">
    <property type="entry name" value="Malonyl-Coenzyme A Acyl Carrier Protein, domain 2"/>
    <property type="match status" value="2"/>
</dbReference>
<dbReference type="Gene3D" id="3.10.129.110">
    <property type="entry name" value="Polyketide synthase dehydratase"/>
    <property type="match status" value="1"/>
</dbReference>
<dbReference type="InterPro" id="IPR001227">
    <property type="entry name" value="Ac_transferase_dom_sf"/>
</dbReference>
<dbReference type="InterPro" id="IPR036736">
    <property type="entry name" value="ACP-like_sf"/>
</dbReference>
<dbReference type="InterPro" id="IPR014043">
    <property type="entry name" value="Acyl_transferase_dom"/>
</dbReference>
<dbReference type="InterPro" id="IPR016035">
    <property type="entry name" value="Acyl_Trfase/lysoPLipase"/>
</dbReference>
<dbReference type="InterPro" id="IPR018201">
    <property type="entry name" value="Ketoacyl_synth_AS"/>
</dbReference>
<dbReference type="InterPro" id="IPR014031">
    <property type="entry name" value="Ketoacyl_synth_C"/>
</dbReference>
<dbReference type="InterPro" id="IPR014030">
    <property type="entry name" value="Ketoacyl_synth_N"/>
</dbReference>
<dbReference type="InterPro" id="IPR020841">
    <property type="entry name" value="PKS_Beta-ketoAc_synthase_dom"/>
</dbReference>
<dbReference type="InterPro" id="IPR042104">
    <property type="entry name" value="PKS_dehydratase_sf"/>
</dbReference>
<dbReference type="InterPro" id="IPR049900">
    <property type="entry name" value="PKS_mFAS_DH"/>
</dbReference>
<dbReference type="InterPro" id="IPR050091">
    <property type="entry name" value="PKS_NRPS_Biosynth_Enz"/>
</dbReference>
<dbReference type="InterPro" id="IPR020806">
    <property type="entry name" value="PKS_PP-bd"/>
</dbReference>
<dbReference type="InterPro" id="IPR009081">
    <property type="entry name" value="PP-bd_ACP"/>
</dbReference>
<dbReference type="InterPro" id="IPR030918">
    <property type="entry name" value="PT_fungal_PKS"/>
</dbReference>
<dbReference type="InterPro" id="IPR032088">
    <property type="entry name" value="SAT"/>
</dbReference>
<dbReference type="InterPro" id="IPR016039">
    <property type="entry name" value="Thiolase-like"/>
</dbReference>
<dbReference type="NCBIfam" id="TIGR04532">
    <property type="entry name" value="PT_fungal_PKS"/>
    <property type="match status" value="1"/>
</dbReference>
<dbReference type="PANTHER" id="PTHR43775">
    <property type="entry name" value="FATTY ACID SYNTHASE"/>
    <property type="match status" value="1"/>
</dbReference>
<dbReference type="PANTHER" id="PTHR43775:SF24">
    <property type="entry name" value="NON-REDUCING POLYKETIDE SYNTHASE APTA-RELATED"/>
    <property type="match status" value="1"/>
</dbReference>
<dbReference type="Pfam" id="PF00698">
    <property type="entry name" value="Acyl_transf_1"/>
    <property type="match status" value="1"/>
</dbReference>
<dbReference type="Pfam" id="PF22621">
    <property type="entry name" value="CurL-like_PKS_C"/>
    <property type="match status" value="1"/>
</dbReference>
<dbReference type="Pfam" id="PF00109">
    <property type="entry name" value="ketoacyl-synt"/>
    <property type="match status" value="1"/>
</dbReference>
<dbReference type="Pfam" id="PF02801">
    <property type="entry name" value="Ketoacyl-synt_C"/>
    <property type="match status" value="1"/>
</dbReference>
<dbReference type="Pfam" id="PF00550">
    <property type="entry name" value="PP-binding"/>
    <property type="match status" value="1"/>
</dbReference>
<dbReference type="Pfam" id="PF16073">
    <property type="entry name" value="SAT"/>
    <property type="match status" value="1"/>
</dbReference>
<dbReference type="SMART" id="SM00827">
    <property type="entry name" value="PKS_AT"/>
    <property type="match status" value="1"/>
</dbReference>
<dbReference type="SMART" id="SM00825">
    <property type="entry name" value="PKS_KS"/>
    <property type="match status" value="1"/>
</dbReference>
<dbReference type="SMART" id="SM00823">
    <property type="entry name" value="PKS_PP"/>
    <property type="match status" value="1"/>
</dbReference>
<dbReference type="SUPFAM" id="SSF47336">
    <property type="entry name" value="ACP-like"/>
    <property type="match status" value="1"/>
</dbReference>
<dbReference type="SUPFAM" id="SSF52151">
    <property type="entry name" value="FabD/lysophospholipase-like"/>
    <property type="match status" value="1"/>
</dbReference>
<dbReference type="SUPFAM" id="SSF53901">
    <property type="entry name" value="Thiolase-like"/>
    <property type="match status" value="1"/>
</dbReference>
<dbReference type="PROSITE" id="PS50075">
    <property type="entry name" value="CARRIER"/>
    <property type="match status" value="1"/>
</dbReference>
<dbReference type="PROSITE" id="PS00606">
    <property type="entry name" value="KS3_1"/>
    <property type="match status" value="1"/>
</dbReference>
<dbReference type="PROSITE" id="PS52004">
    <property type="entry name" value="KS3_2"/>
    <property type="match status" value="1"/>
</dbReference>
<dbReference type="PROSITE" id="PS52019">
    <property type="entry name" value="PKS_MFAS_DH"/>
    <property type="match status" value="1"/>
</dbReference>
<comment type="function">
    <text evidence="2 3 11">Non-reducing polyketide synthase; part of the gene cluster that mediates the biosynthesis of neosartoricin B, a prenylated anthracenone that probably exhibits T-cell antiproliferative activity, suggestive of a physiological role as an immunosuppressive agent (PubMed:23758576). The non-reducing polyketide synthase nscA probably synthesizes and cyclizes the decaketide backbone (By similarity). The hydrolase nscB then mediates the product release through hydrolysis followed by spontaneous decarboxylation (By similarity). The prenyltransferase nscD catalyzes the addition of the dimethylallyl group to the aromatic C5 (By similarity). The FAD-dependent monooxygenase nscC is then responsible for the stereospecific hydroxylation at C2 (By similarity). Neosartoricin B can be converted into two additional compounds neosartoricins C and D (By similarity). Neosartoricin C is a spirocyclic compound that is cyclized through the attack of C3 hydroxyl on C14, followed by dehydration (By similarity). On the other hand, neosartoricin D is a further cyclized compound in which attack of C2 on C14 in neosartoricin C results in the formation of the acetal-containing dioxabicyclo-octanone ring (By similarity). Both of these compounds are novel and possibly represent related metabolites of the gene cluster (By similarity).</text>
</comment>
<comment type="cofactor">
    <cofactor evidence="1">
        <name>pantetheine 4'-phosphate</name>
        <dbReference type="ChEBI" id="CHEBI:47942"/>
    </cofactor>
    <text evidence="5">Binds 1 phosphopantetheine covalently.</text>
</comment>
<comment type="pathway">
    <text evidence="11">Secondary metabolite biosynthesis.</text>
</comment>
<comment type="domain">
    <text evidence="4">Multidomain protein; including a starter unit:ACP transacylase (SAT) that selects the starter unit; a ketosynthase (KS) that catalyzes repeated decarboxylative condensation to elongate the polyketide backbone; a malonyl-CoA:ACP transacylase (MAT) that selects and transfers the extender unit malonyl-CoA; a product template (PT) domain that controls the immediate cyclization regioselectivity of the reactive polyketide backbone; and an acyl-carrier protein (ACP) that serves as the tether of the growing and completed polyketide via its phosphopantetheinyl arm (By similarity).</text>
</comment>